<accession>Q9Y7P2</accession>
<gene>
    <name evidence="10" type="ORF">SPCC1450.15</name>
</gene>
<protein>
    <recommendedName>
        <fullName evidence="9">PIGF/3-ketodihydrosphingosine reductase fusion protein</fullName>
        <ecNumber evidence="4">1.1.1.102</ecNumber>
    </recommendedName>
    <alternativeName>
        <fullName evidence="9">3-ketodihydrosphingosine reductase</fullName>
    </alternativeName>
    <alternativeName>
        <fullName evidence="9">PIGF homolog</fullName>
    </alternativeName>
</protein>
<keyword id="KW-0256">Endoplasmic reticulum</keyword>
<keyword id="KW-0337">GPI-anchor biosynthesis</keyword>
<keyword id="KW-0443">Lipid metabolism</keyword>
<keyword id="KW-0472">Membrane</keyword>
<keyword id="KW-0521">NADP</keyword>
<keyword id="KW-0547">Nucleotide-binding</keyword>
<keyword id="KW-0560">Oxidoreductase</keyword>
<keyword id="KW-1185">Reference proteome</keyword>
<keyword id="KW-0746">Sphingolipid metabolism</keyword>
<keyword id="KW-0812">Transmembrane</keyword>
<keyword id="KW-1133">Transmembrane helix</keyword>
<name>GPI11_SCHPO</name>
<feature type="chain" id="PRO_0000339877" description="PIGF/3-ketodihydrosphingosine reductase fusion protein">
    <location>
        <begin position="1"/>
        <end position="494"/>
    </location>
</feature>
<feature type="transmembrane region" description="Helical" evidence="7">
    <location>
        <begin position="148"/>
        <end position="168"/>
    </location>
</feature>
<feature type="transmembrane region" description="Helical" evidence="7">
    <location>
        <begin position="264"/>
        <end position="284"/>
    </location>
</feature>
<feature type="transmembrane region" description="Helical" evidence="7">
    <location>
        <begin position="312"/>
        <end position="332"/>
    </location>
</feature>
<feature type="transmembrane region" description="Helical" evidence="7">
    <location>
        <begin position="370"/>
        <end position="390"/>
    </location>
</feature>
<feature type="transmembrane region" description="Helical" evidence="7">
    <location>
        <begin position="402"/>
        <end position="422"/>
    </location>
</feature>
<feature type="transmembrane region" description="Helical" evidence="7">
    <location>
        <begin position="444"/>
        <end position="464"/>
    </location>
</feature>
<feature type="transmembrane region" description="Helical" evidence="7">
    <location>
        <begin position="473"/>
        <end position="493"/>
    </location>
</feature>
<feature type="short sequence motif" description="GXSXG" evidence="5">
    <location>
        <begin position="20"/>
        <end position="24"/>
    </location>
</feature>
<feature type="active site" description="Proton acceptor" evidence="8">
    <location>
        <position position="166"/>
    </location>
</feature>
<feature type="active site" description="Lowers pKa of active site Tyr" evidence="2">
    <location>
        <position position="170"/>
    </location>
</feature>
<feature type="binding site" evidence="3">
    <location>
        <position position="20"/>
    </location>
    <ligand>
        <name>NADPH</name>
        <dbReference type="ChEBI" id="CHEBI:57783"/>
    </ligand>
</feature>
<feature type="binding site" evidence="3">
    <location>
        <position position="22"/>
    </location>
    <ligand>
        <name>NADPH</name>
        <dbReference type="ChEBI" id="CHEBI:57783"/>
    </ligand>
</feature>
<feature type="binding site" evidence="3">
    <location>
        <position position="24"/>
    </location>
    <ligand>
        <name>NADPH</name>
        <dbReference type="ChEBI" id="CHEBI:57783"/>
    </ligand>
</feature>
<feature type="binding site" evidence="1">
    <location>
        <position position="25"/>
    </location>
    <ligand>
        <name>NADP(+)</name>
        <dbReference type="ChEBI" id="CHEBI:58349"/>
    </ligand>
</feature>
<feature type="binding site" evidence="3">
    <location>
        <position position="45"/>
    </location>
    <ligand>
        <name>NADPH</name>
        <dbReference type="ChEBI" id="CHEBI:57783"/>
    </ligand>
</feature>
<feature type="binding site" evidence="3">
    <location>
        <position position="49"/>
    </location>
    <ligand>
        <name>NADPH</name>
        <dbReference type="ChEBI" id="CHEBI:57783"/>
    </ligand>
</feature>
<feature type="binding site" evidence="1">
    <location>
        <position position="54"/>
    </location>
    <ligand>
        <name>NADP(+)</name>
        <dbReference type="ChEBI" id="CHEBI:58349"/>
    </ligand>
</feature>
<feature type="binding site" evidence="3">
    <location>
        <position position="74"/>
    </location>
    <ligand>
        <name>NADPH</name>
        <dbReference type="ChEBI" id="CHEBI:57783"/>
    </ligand>
</feature>
<feature type="binding site" evidence="3">
    <location>
        <position position="75"/>
    </location>
    <ligand>
        <name>NADPH</name>
        <dbReference type="ChEBI" id="CHEBI:57783"/>
    </ligand>
</feature>
<feature type="binding site" evidence="2">
    <location>
        <position position="166"/>
    </location>
    <ligand>
        <name>NADP(+)</name>
        <dbReference type="ChEBI" id="CHEBI:58349"/>
    </ligand>
</feature>
<feature type="binding site" evidence="2">
    <location>
        <position position="170"/>
    </location>
    <ligand>
        <name>NADP(+)</name>
        <dbReference type="ChEBI" id="CHEBI:58349"/>
    </ligand>
</feature>
<feature type="binding site" evidence="1">
    <location>
        <position position="199"/>
    </location>
    <ligand>
        <name>NADP(+)</name>
        <dbReference type="ChEBI" id="CHEBI:58349"/>
    </ligand>
</feature>
<comment type="function">
    <text evidence="6">Acts in the GPI biosynthetic pathway between GlcNAc-PI synthesis and GPI transfer to protein. Required for the formation of complete GPI precursors CP1 and CP2.</text>
</comment>
<comment type="function">
    <text evidence="4">Catalyzes the reduction of 3'-oxosphinganine (3-ketodihydrosphingosine/KDS) to sphinganine (dihydrosphingosine/DHS), the second step of de novo sphingolipid biosynthesis.</text>
</comment>
<comment type="catalytic activity">
    <reaction evidence="4">
        <text>sphinganine + NADP(+) = 3-oxosphinganine + NADPH + H(+)</text>
        <dbReference type="Rhea" id="RHEA:22640"/>
        <dbReference type="ChEBI" id="CHEBI:15378"/>
        <dbReference type="ChEBI" id="CHEBI:57783"/>
        <dbReference type="ChEBI" id="CHEBI:57817"/>
        <dbReference type="ChEBI" id="CHEBI:58299"/>
        <dbReference type="ChEBI" id="CHEBI:58349"/>
        <dbReference type="EC" id="1.1.1.102"/>
    </reaction>
    <physiologicalReaction direction="right-to-left" evidence="4">
        <dbReference type="Rhea" id="RHEA:22642"/>
    </physiologicalReaction>
</comment>
<comment type="pathway">
    <text evidence="9">Glycolipid biosynthesis; glycosylphosphatidylinositol-anchor biosynthesis.</text>
</comment>
<comment type="pathway">
    <text evidence="9">Lipid metabolism; sphingolipid metabolism.</text>
</comment>
<comment type="subcellular location">
    <subcellularLocation>
        <location evidence="6">Endoplasmic reticulum membrane</location>
        <topology evidence="6">Multi-pass membrane protein</topology>
    </subcellularLocation>
</comment>
<comment type="similarity">
    <text evidence="9">In the N-terminal section; belongs to the short-chain dehydrogenases/reductases (SDR) family.</text>
</comment>
<comment type="similarity">
    <text evidence="9">In the C-terminal section; belongs to the PIGF family.</text>
</comment>
<sequence length="494" mass="55644">MGFWGRNSFEADKKHILVTGGSQGLGKAIAKELVLRGANVTIVARTVTKLQEAVAELSDSKIHEDQQVSFESVDLTSYESVHSMIERLPFCPDHVVHCAGSCIPGFFTELDPSVFEKQMRQNYLASVYVCHAAIRRMKEISPSYSRRILLVGSLLSSLPIIGYSAYSPVKAAVRNLADSLRQECILYDIEVSVYLPSTILSPGYEQENTLKPELVLQMEGMDSVQTCEEAASHCMTGLDRGDFLIANESTGHLMKNHCRNSSPHDNPILEYLFALVSLLAWPFYRRKLDSLVYQYALEKGYRQPSSSRNSWIFTLLLTFTQLTIFYLSLNCLIENPYRMLRNTFPIWFIMQTLQIYIQSPRPPLTPKRLLAGAASMLIGSLLISFILVAFGAPLLHDFHLTYFCALTLSVFTVYPLASTLAFNTEQWQRFLTLKSFNVIGSMQLRSWGPIIGAWFGAFPIPLDWDRPWQAWPITIVIGAFLGYAFAAIVGEILQ</sequence>
<organism>
    <name type="scientific">Schizosaccharomyces pombe (strain 972 / ATCC 24843)</name>
    <name type="common">Fission yeast</name>
    <dbReference type="NCBI Taxonomy" id="284812"/>
    <lineage>
        <taxon>Eukaryota</taxon>
        <taxon>Fungi</taxon>
        <taxon>Dikarya</taxon>
        <taxon>Ascomycota</taxon>
        <taxon>Taphrinomycotina</taxon>
        <taxon>Schizosaccharomycetes</taxon>
        <taxon>Schizosaccharomycetales</taxon>
        <taxon>Schizosaccharomycetaceae</taxon>
        <taxon>Schizosaccharomyces</taxon>
    </lineage>
</organism>
<reference key="1">
    <citation type="journal article" date="2002" name="Nature">
        <title>The genome sequence of Schizosaccharomyces pombe.</title>
        <authorList>
            <person name="Wood V."/>
            <person name="Gwilliam R."/>
            <person name="Rajandream M.A."/>
            <person name="Lyne M.H."/>
            <person name="Lyne R."/>
            <person name="Stewart A."/>
            <person name="Sgouros J.G."/>
            <person name="Peat N."/>
            <person name="Hayles J."/>
            <person name="Baker S.G."/>
            <person name="Basham D."/>
            <person name="Bowman S."/>
            <person name="Brooks K."/>
            <person name="Brown D."/>
            <person name="Brown S."/>
            <person name="Chillingworth T."/>
            <person name="Churcher C.M."/>
            <person name="Collins M."/>
            <person name="Connor R."/>
            <person name="Cronin A."/>
            <person name="Davis P."/>
            <person name="Feltwell T."/>
            <person name="Fraser A."/>
            <person name="Gentles S."/>
            <person name="Goble A."/>
            <person name="Hamlin N."/>
            <person name="Harris D.E."/>
            <person name="Hidalgo J."/>
            <person name="Hodgson G."/>
            <person name="Holroyd S."/>
            <person name="Hornsby T."/>
            <person name="Howarth S."/>
            <person name="Huckle E.J."/>
            <person name="Hunt S."/>
            <person name="Jagels K."/>
            <person name="James K.D."/>
            <person name="Jones L."/>
            <person name="Jones M."/>
            <person name="Leather S."/>
            <person name="McDonald S."/>
            <person name="McLean J."/>
            <person name="Mooney P."/>
            <person name="Moule S."/>
            <person name="Mungall K.L."/>
            <person name="Murphy L.D."/>
            <person name="Niblett D."/>
            <person name="Odell C."/>
            <person name="Oliver K."/>
            <person name="O'Neil S."/>
            <person name="Pearson D."/>
            <person name="Quail M.A."/>
            <person name="Rabbinowitsch E."/>
            <person name="Rutherford K.M."/>
            <person name="Rutter S."/>
            <person name="Saunders D."/>
            <person name="Seeger K."/>
            <person name="Sharp S."/>
            <person name="Skelton J."/>
            <person name="Simmonds M.N."/>
            <person name="Squares R."/>
            <person name="Squares S."/>
            <person name="Stevens K."/>
            <person name="Taylor K."/>
            <person name="Taylor R.G."/>
            <person name="Tivey A."/>
            <person name="Walsh S.V."/>
            <person name="Warren T."/>
            <person name="Whitehead S."/>
            <person name="Woodward J.R."/>
            <person name="Volckaert G."/>
            <person name="Aert R."/>
            <person name="Robben J."/>
            <person name="Grymonprez B."/>
            <person name="Weltjens I."/>
            <person name="Vanstreels E."/>
            <person name="Rieger M."/>
            <person name="Schaefer M."/>
            <person name="Mueller-Auer S."/>
            <person name="Gabel C."/>
            <person name="Fuchs M."/>
            <person name="Duesterhoeft A."/>
            <person name="Fritzc C."/>
            <person name="Holzer E."/>
            <person name="Moestl D."/>
            <person name="Hilbert H."/>
            <person name="Borzym K."/>
            <person name="Langer I."/>
            <person name="Beck A."/>
            <person name="Lehrach H."/>
            <person name="Reinhardt R."/>
            <person name="Pohl T.M."/>
            <person name="Eger P."/>
            <person name="Zimmermann W."/>
            <person name="Wedler H."/>
            <person name="Wambutt R."/>
            <person name="Purnelle B."/>
            <person name="Goffeau A."/>
            <person name="Cadieu E."/>
            <person name="Dreano S."/>
            <person name="Gloux S."/>
            <person name="Lelaure V."/>
            <person name="Mottier S."/>
            <person name="Galibert F."/>
            <person name="Aves S.J."/>
            <person name="Xiang Z."/>
            <person name="Hunt C."/>
            <person name="Moore K."/>
            <person name="Hurst S.M."/>
            <person name="Lucas M."/>
            <person name="Rochet M."/>
            <person name="Gaillardin C."/>
            <person name="Tallada V.A."/>
            <person name="Garzon A."/>
            <person name="Thode G."/>
            <person name="Daga R.R."/>
            <person name="Cruzado L."/>
            <person name="Jimenez J."/>
            <person name="Sanchez M."/>
            <person name="del Rey F."/>
            <person name="Benito J."/>
            <person name="Dominguez A."/>
            <person name="Revuelta J.L."/>
            <person name="Moreno S."/>
            <person name="Armstrong J."/>
            <person name="Forsburg S.L."/>
            <person name="Cerutti L."/>
            <person name="Lowe T."/>
            <person name="McCombie W.R."/>
            <person name="Paulsen I."/>
            <person name="Potashkin J."/>
            <person name="Shpakovski G.V."/>
            <person name="Ussery D."/>
            <person name="Barrell B.G."/>
            <person name="Nurse P."/>
        </authorList>
    </citation>
    <scope>NUCLEOTIDE SEQUENCE [LARGE SCALE GENOMIC DNA]</scope>
    <source>
        <strain>972 / ATCC 24843</strain>
    </source>
</reference>
<reference key="2">
    <citation type="journal article" date="2011" name="Science">
        <title>Comparative functional genomics of the fission yeasts.</title>
        <authorList>
            <person name="Rhind N."/>
            <person name="Chen Z."/>
            <person name="Yassour M."/>
            <person name="Thompson D.A."/>
            <person name="Haas B.J."/>
            <person name="Habib N."/>
            <person name="Wapinski I."/>
            <person name="Roy S."/>
            <person name="Lin M.F."/>
            <person name="Heiman D.I."/>
            <person name="Young S.K."/>
            <person name="Furuya K."/>
            <person name="Guo Y."/>
            <person name="Pidoux A."/>
            <person name="Chen H.M."/>
            <person name="Robbertse B."/>
            <person name="Goldberg J.M."/>
            <person name="Aoki K."/>
            <person name="Bayne E.H."/>
            <person name="Berlin A.M."/>
            <person name="Desjardins C.A."/>
            <person name="Dobbs E."/>
            <person name="Dukaj L."/>
            <person name="Fan L."/>
            <person name="FitzGerald M.G."/>
            <person name="French C."/>
            <person name="Gujja S."/>
            <person name="Hansen K."/>
            <person name="Keifenheim D."/>
            <person name="Levin J.Z."/>
            <person name="Mosher R.A."/>
            <person name="Mueller C.A."/>
            <person name="Pfiffner J."/>
            <person name="Priest M."/>
            <person name="Russ C."/>
            <person name="Smialowska A."/>
            <person name="Swoboda P."/>
            <person name="Sykes S.M."/>
            <person name="Vaughn M."/>
            <person name="Vengrova S."/>
            <person name="Yoder R."/>
            <person name="Zeng Q."/>
            <person name="Allshire R."/>
            <person name="Baulcombe D."/>
            <person name="Birren B.W."/>
            <person name="Brown W."/>
            <person name="Ekwall K."/>
            <person name="Kellis M."/>
            <person name="Leatherwood J."/>
            <person name="Levin H."/>
            <person name="Margalit H."/>
            <person name="Martienssen R."/>
            <person name="Nieduszynski C.A."/>
            <person name="Spatafora J.W."/>
            <person name="Friedman N."/>
            <person name="Dalgaard J.Z."/>
            <person name="Baumann P."/>
            <person name="Niki H."/>
            <person name="Regev A."/>
            <person name="Nusbaum C."/>
        </authorList>
    </citation>
    <scope>REVISION OF GENE MODEL</scope>
</reference>
<proteinExistence type="inferred from homology"/>
<evidence type="ECO:0000250" key="1">
    <source>
        <dbReference type="UniProtKB" id="L0E2Z4"/>
    </source>
</evidence>
<evidence type="ECO:0000250" key="2">
    <source>
        <dbReference type="UniProtKB" id="O93868"/>
    </source>
</evidence>
<evidence type="ECO:0000250" key="3">
    <source>
        <dbReference type="UniProtKB" id="P0CR36"/>
    </source>
</evidence>
<evidence type="ECO:0000250" key="4">
    <source>
        <dbReference type="UniProtKB" id="P38342"/>
    </source>
</evidence>
<evidence type="ECO:0000250" key="5">
    <source>
        <dbReference type="UniProtKB" id="P40471"/>
    </source>
</evidence>
<evidence type="ECO:0000250" key="6">
    <source>
        <dbReference type="UniProtKB" id="Q06636"/>
    </source>
</evidence>
<evidence type="ECO:0000255" key="7"/>
<evidence type="ECO:0000255" key="8">
    <source>
        <dbReference type="PROSITE-ProRule" id="PRU10001"/>
    </source>
</evidence>
<evidence type="ECO:0000305" key="9"/>
<evidence type="ECO:0000312" key="10">
    <source>
        <dbReference type="PomBase" id="SPCC1450.15"/>
    </source>
</evidence>
<dbReference type="EC" id="1.1.1.102" evidence="4"/>
<dbReference type="EMBL" id="CU329672">
    <property type="protein sequence ID" value="CAB40182.2"/>
    <property type="molecule type" value="Genomic_DNA"/>
</dbReference>
<dbReference type="PIR" id="T40997">
    <property type="entry name" value="T40997"/>
</dbReference>
<dbReference type="RefSeq" id="NP_588314.2">
    <property type="nucleotide sequence ID" value="NM_001023304.2"/>
</dbReference>
<dbReference type="SMR" id="Q9Y7P2"/>
<dbReference type="BioGRID" id="275857">
    <property type="interactions" value="1"/>
</dbReference>
<dbReference type="FunCoup" id="Q9Y7P2">
    <property type="interactions" value="129"/>
</dbReference>
<dbReference type="STRING" id="284812.Q9Y7P2"/>
<dbReference type="SwissPalm" id="Q9Y7P2"/>
<dbReference type="PaxDb" id="4896-SPCC1450.15.1"/>
<dbReference type="EnsemblFungi" id="SPCC1450.15.1">
    <property type="protein sequence ID" value="SPCC1450.15.1:pep"/>
    <property type="gene ID" value="SPCC1450.15"/>
</dbReference>
<dbReference type="KEGG" id="spo:2539289"/>
<dbReference type="PomBase" id="SPCC1450.15"/>
<dbReference type="VEuPathDB" id="FungiDB:SPCC1450.15"/>
<dbReference type="eggNOG" id="KOG1210">
    <property type="taxonomic scope" value="Eukaryota"/>
</dbReference>
<dbReference type="eggNOG" id="KOG3144">
    <property type="taxonomic scope" value="Eukaryota"/>
</dbReference>
<dbReference type="HOGENOM" id="CLU_552265_0_0_1"/>
<dbReference type="InParanoid" id="Q9Y7P2"/>
<dbReference type="OMA" id="RQECILY"/>
<dbReference type="Reactome" id="R-SPO-1660661">
    <property type="pathway name" value="Sphingolipid de novo biosynthesis"/>
</dbReference>
<dbReference type="UniPathway" id="UPA00196"/>
<dbReference type="UniPathway" id="UPA00222"/>
<dbReference type="PRO" id="PR:Q9Y7P2"/>
<dbReference type="Proteomes" id="UP000002485">
    <property type="component" value="Chromosome III"/>
</dbReference>
<dbReference type="GO" id="GO:0005789">
    <property type="term" value="C:endoplasmic reticulum membrane"/>
    <property type="evidence" value="ECO:0000318"/>
    <property type="project" value="GO_Central"/>
</dbReference>
<dbReference type="GO" id="GO:0047560">
    <property type="term" value="F:3-dehydrosphinganine reductase activity"/>
    <property type="evidence" value="ECO:0000250"/>
    <property type="project" value="UniProtKB"/>
</dbReference>
<dbReference type="GO" id="GO:0070402">
    <property type="term" value="F:NADPH binding"/>
    <property type="evidence" value="ECO:0000250"/>
    <property type="project" value="UniProtKB"/>
</dbReference>
<dbReference type="GO" id="GO:0006666">
    <property type="term" value="P:3-keto-sphinganine metabolic process"/>
    <property type="evidence" value="ECO:0000250"/>
    <property type="project" value="UniProtKB"/>
</dbReference>
<dbReference type="GO" id="GO:0006506">
    <property type="term" value="P:GPI anchor biosynthetic process"/>
    <property type="evidence" value="ECO:0000266"/>
    <property type="project" value="PomBase"/>
</dbReference>
<dbReference type="GO" id="GO:0030148">
    <property type="term" value="P:sphingolipid biosynthetic process"/>
    <property type="evidence" value="ECO:0000250"/>
    <property type="project" value="UniProtKB"/>
</dbReference>
<dbReference type="CDD" id="cd08939">
    <property type="entry name" value="KDSR-like_SDR_c"/>
    <property type="match status" value="1"/>
</dbReference>
<dbReference type="Gene3D" id="3.40.50.720">
    <property type="entry name" value="NAD(P)-binding Rossmann-like Domain"/>
    <property type="match status" value="1"/>
</dbReference>
<dbReference type="InterPro" id="IPR009580">
    <property type="entry name" value="GPI_biosynthesis_protein_Pig-F"/>
</dbReference>
<dbReference type="InterPro" id="IPR045022">
    <property type="entry name" value="KDSR-like"/>
</dbReference>
<dbReference type="InterPro" id="IPR036291">
    <property type="entry name" value="NAD(P)-bd_dom_sf"/>
</dbReference>
<dbReference type="InterPro" id="IPR002347">
    <property type="entry name" value="SDR_fam"/>
</dbReference>
<dbReference type="PANTHER" id="PTHR43550">
    <property type="entry name" value="3-KETODIHYDROSPHINGOSINE REDUCTASE"/>
    <property type="match status" value="1"/>
</dbReference>
<dbReference type="PANTHER" id="PTHR43550:SF3">
    <property type="entry name" value="3-KETODIHYDROSPHINGOSINE REDUCTASE"/>
    <property type="match status" value="1"/>
</dbReference>
<dbReference type="Pfam" id="PF00106">
    <property type="entry name" value="adh_short"/>
    <property type="match status" value="1"/>
</dbReference>
<dbReference type="Pfam" id="PF06699">
    <property type="entry name" value="PIG-F"/>
    <property type="match status" value="1"/>
</dbReference>
<dbReference type="PRINTS" id="PR00081">
    <property type="entry name" value="GDHRDH"/>
</dbReference>
<dbReference type="SUPFAM" id="SSF51735">
    <property type="entry name" value="NAD(P)-binding Rossmann-fold domains"/>
    <property type="match status" value="1"/>
</dbReference>